<reference key="1">
    <citation type="journal article" date="2002" name="J. Bacteriol.">
        <title>Whole-genome comparison of Mycobacterium tuberculosis clinical and laboratory strains.</title>
        <authorList>
            <person name="Fleischmann R.D."/>
            <person name="Alland D."/>
            <person name="Eisen J.A."/>
            <person name="Carpenter L."/>
            <person name="White O."/>
            <person name="Peterson J.D."/>
            <person name="DeBoy R.T."/>
            <person name="Dodson R.J."/>
            <person name="Gwinn M.L."/>
            <person name="Haft D.H."/>
            <person name="Hickey E.K."/>
            <person name="Kolonay J.F."/>
            <person name="Nelson W.C."/>
            <person name="Umayam L.A."/>
            <person name="Ermolaeva M.D."/>
            <person name="Salzberg S.L."/>
            <person name="Delcher A."/>
            <person name="Utterback T.R."/>
            <person name="Weidman J.F."/>
            <person name="Khouri H.M."/>
            <person name="Gill J."/>
            <person name="Mikula A."/>
            <person name="Bishai W."/>
            <person name="Jacobs W.R. Jr."/>
            <person name="Venter J.C."/>
            <person name="Fraser C.M."/>
        </authorList>
    </citation>
    <scope>NUCLEOTIDE SEQUENCE [LARGE SCALE GENOMIC DNA]</scope>
    <source>
        <strain>CDC 1551 / Oshkosh</strain>
    </source>
</reference>
<gene>
    <name evidence="1" type="primary">gltX</name>
    <name type="synonym">gltS</name>
    <name type="ordered locus">MT3070</name>
</gene>
<proteinExistence type="inferred from homology"/>
<protein>
    <recommendedName>
        <fullName evidence="1">Glutamate--tRNA ligase</fullName>
        <ecNumber evidence="1">6.1.1.17</ecNumber>
    </recommendedName>
    <alternativeName>
        <fullName evidence="1">Glutamyl-tRNA synthetase</fullName>
        <shortName evidence="1">GluRS</shortName>
    </alternativeName>
</protein>
<organism>
    <name type="scientific">Mycobacterium tuberculosis (strain CDC 1551 / Oshkosh)</name>
    <dbReference type="NCBI Taxonomy" id="83331"/>
    <lineage>
        <taxon>Bacteria</taxon>
        <taxon>Bacillati</taxon>
        <taxon>Actinomycetota</taxon>
        <taxon>Actinomycetes</taxon>
        <taxon>Mycobacteriales</taxon>
        <taxon>Mycobacteriaceae</taxon>
        <taxon>Mycobacterium</taxon>
        <taxon>Mycobacterium tuberculosis complex</taxon>
    </lineage>
</organism>
<keyword id="KW-0030">Aminoacyl-tRNA synthetase</keyword>
<keyword id="KW-0067">ATP-binding</keyword>
<keyword id="KW-0963">Cytoplasm</keyword>
<keyword id="KW-0436">Ligase</keyword>
<keyword id="KW-0547">Nucleotide-binding</keyword>
<keyword id="KW-0648">Protein biosynthesis</keyword>
<keyword id="KW-1185">Reference proteome</keyword>
<dbReference type="EC" id="6.1.1.17" evidence="1"/>
<dbReference type="EMBL" id="AE000516">
    <property type="protein sequence ID" value="AAK47399.1"/>
    <property type="molecule type" value="Genomic_DNA"/>
</dbReference>
<dbReference type="PIR" id="C70854">
    <property type="entry name" value="C70854"/>
</dbReference>
<dbReference type="RefSeq" id="WP_003415122.1">
    <property type="nucleotide sequence ID" value="NZ_KK341227.1"/>
</dbReference>
<dbReference type="SMR" id="P9WFV8"/>
<dbReference type="KEGG" id="mtc:MT3070"/>
<dbReference type="PATRIC" id="fig|83331.31.peg.3313"/>
<dbReference type="HOGENOM" id="CLU_015768_6_1_11"/>
<dbReference type="Proteomes" id="UP000001020">
    <property type="component" value="Chromosome"/>
</dbReference>
<dbReference type="GO" id="GO:0005829">
    <property type="term" value="C:cytosol"/>
    <property type="evidence" value="ECO:0007669"/>
    <property type="project" value="TreeGrafter"/>
</dbReference>
<dbReference type="GO" id="GO:0005524">
    <property type="term" value="F:ATP binding"/>
    <property type="evidence" value="ECO:0007669"/>
    <property type="project" value="UniProtKB-UniRule"/>
</dbReference>
<dbReference type="GO" id="GO:0004818">
    <property type="term" value="F:glutamate-tRNA ligase activity"/>
    <property type="evidence" value="ECO:0007669"/>
    <property type="project" value="UniProtKB-UniRule"/>
</dbReference>
<dbReference type="GO" id="GO:0000049">
    <property type="term" value="F:tRNA binding"/>
    <property type="evidence" value="ECO:0007669"/>
    <property type="project" value="InterPro"/>
</dbReference>
<dbReference type="GO" id="GO:0008270">
    <property type="term" value="F:zinc ion binding"/>
    <property type="evidence" value="ECO:0007669"/>
    <property type="project" value="InterPro"/>
</dbReference>
<dbReference type="GO" id="GO:0006424">
    <property type="term" value="P:glutamyl-tRNA aminoacylation"/>
    <property type="evidence" value="ECO:0007669"/>
    <property type="project" value="UniProtKB-UniRule"/>
</dbReference>
<dbReference type="CDD" id="cd00808">
    <property type="entry name" value="GluRS_core"/>
    <property type="match status" value="1"/>
</dbReference>
<dbReference type="FunFam" id="3.40.50.620:FF:000149">
    <property type="entry name" value="Glutamate--tRNA ligase"/>
    <property type="match status" value="1"/>
</dbReference>
<dbReference type="FunFam" id="3.90.800.10:FF:000003">
    <property type="entry name" value="Glutamate--tRNA ligase"/>
    <property type="match status" value="1"/>
</dbReference>
<dbReference type="Gene3D" id="1.10.10.350">
    <property type="match status" value="1"/>
</dbReference>
<dbReference type="Gene3D" id="1.10.8.70">
    <property type="entry name" value="Glutamate-tRNA synthetase, class I, anticodon-binding domain 1"/>
    <property type="match status" value="1"/>
</dbReference>
<dbReference type="Gene3D" id="1.10.1160.10">
    <property type="entry name" value="Glutamyl-trna Synthetase, Domain 2"/>
    <property type="match status" value="1"/>
</dbReference>
<dbReference type="Gene3D" id="3.90.800.10">
    <property type="entry name" value="Glutamyl-tRNA Synthetase, Domain 3"/>
    <property type="match status" value="1"/>
</dbReference>
<dbReference type="Gene3D" id="3.40.50.620">
    <property type="entry name" value="HUPs"/>
    <property type="match status" value="1"/>
</dbReference>
<dbReference type="HAMAP" id="MF_00022">
    <property type="entry name" value="Glu_tRNA_synth_type1"/>
    <property type="match status" value="1"/>
</dbReference>
<dbReference type="InterPro" id="IPR045462">
    <property type="entry name" value="aa-tRNA-synth_I_cd-bd"/>
</dbReference>
<dbReference type="InterPro" id="IPR020751">
    <property type="entry name" value="aa-tRNA-synth_I_codon-bd_sub2"/>
</dbReference>
<dbReference type="InterPro" id="IPR008925">
    <property type="entry name" value="aa_tRNA-synth_I_cd-bd_sf"/>
</dbReference>
<dbReference type="InterPro" id="IPR004527">
    <property type="entry name" value="Glu-tRNA-ligase_bac/mito"/>
</dbReference>
<dbReference type="InterPro" id="IPR020752">
    <property type="entry name" value="Glu-tRNA-synth_I_codon-bd_sub1"/>
</dbReference>
<dbReference type="InterPro" id="IPR000924">
    <property type="entry name" value="Glu/Gln-tRNA-synth"/>
</dbReference>
<dbReference type="InterPro" id="IPR020058">
    <property type="entry name" value="Glu/Gln-tRNA-synth_Ib_cat-dom"/>
</dbReference>
<dbReference type="InterPro" id="IPR020061">
    <property type="entry name" value="Glu_tRNA_lig_a-bdl"/>
</dbReference>
<dbReference type="InterPro" id="IPR049940">
    <property type="entry name" value="GluQ/Sye"/>
</dbReference>
<dbReference type="InterPro" id="IPR033910">
    <property type="entry name" value="GluRS_core"/>
</dbReference>
<dbReference type="InterPro" id="IPR014729">
    <property type="entry name" value="Rossmann-like_a/b/a_fold"/>
</dbReference>
<dbReference type="NCBIfam" id="TIGR00464">
    <property type="entry name" value="gltX_bact"/>
    <property type="match status" value="1"/>
</dbReference>
<dbReference type="PANTHER" id="PTHR43311">
    <property type="entry name" value="GLUTAMATE--TRNA LIGASE"/>
    <property type="match status" value="1"/>
</dbReference>
<dbReference type="PANTHER" id="PTHR43311:SF2">
    <property type="entry name" value="GLUTAMATE--TRNA LIGASE, MITOCHONDRIAL-RELATED"/>
    <property type="match status" value="1"/>
</dbReference>
<dbReference type="Pfam" id="PF19269">
    <property type="entry name" value="Anticodon_2"/>
    <property type="match status" value="1"/>
</dbReference>
<dbReference type="Pfam" id="PF00749">
    <property type="entry name" value="tRNA-synt_1c"/>
    <property type="match status" value="1"/>
</dbReference>
<dbReference type="PRINTS" id="PR00987">
    <property type="entry name" value="TRNASYNTHGLU"/>
</dbReference>
<dbReference type="SUPFAM" id="SSF48163">
    <property type="entry name" value="An anticodon-binding domain of class I aminoacyl-tRNA synthetases"/>
    <property type="match status" value="1"/>
</dbReference>
<dbReference type="SUPFAM" id="SSF52374">
    <property type="entry name" value="Nucleotidylyl transferase"/>
    <property type="match status" value="1"/>
</dbReference>
<sequence>MTATETVRVRFCPSPTGTPHVGLVRTALFNWAYARHTGGTFVFRIEDTDAQRDSEESYLALLDALRWLGLDWDEGPEVGGPYGPYRQSQRAEIYRDVLARLLAAGEAYHAFSTPEEVEARHVAAGRNPKLGYDNFDRHLTDAQRAAYLAEGRQPVVRLRMPDDDLAWNDLVRGPVTFAAGSVPDFALTRASGDPLYTLVNPCDDALMKITHVLRGEDLLPSTPRQLALHQALIRIGVAERIPKFAHLPTVLGEGTKKLSKRDPQSNLFAHRDRGFIPEGLLNYLALLGWSIADDHDLFGLDEMVAAFDVADVNSSPARFDQKKADALNAEHIRMLDVGDFTVRLRDHLDTHGHHIALDEAAFAAAAELVQTRIVVLGDAWELLKFFNDDQYVIDPKAAAKELGPDGAAVLDAALAALTSVTDWTAPLIEAALKDALIEGLALKPRKAFSPIRVAATGTTVSPPLFESLELLGRDRSMQRLRAARQLVGHA</sequence>
<feature type="chain" id="PRO_0000428469" description="Glutamate--tRNA ligase">
    <location>
        <begin position="1"/>
        <end position="490"/>
    </location>
</feature>
<feature type="short sequence motif" description="'HIGH' region" evidence="1">
    <location>
        <begin position="13"/>
        <end position="23"/>
    </location>
</feature>
<feature type="short sequence motif" description="'KMSKS' region" evidence="1">
    <location>
        <begin position="257"/>
        <end position="261"/>
    </location>
</feature>
<feature type="binding site" evidence="1">
    <location>
        <position position="260"/>
    </location>
    <ligand>
        <name>ATP</name>
        <dbReference type="ChEBI" id="CHEBI:30616"/>
    </ligand>
</feature>
<name>SYE_MYCTO</name>
<accession>P9WFV8</accession>
<accession>L0TE59</accession>
<accession>O53241</accession>
<accession>P0A636</accession>
<evidence type="ECO:0000255" key="1">
    <source>
        <dbReference type="HAMAP-Rule" id="MF_00022"/>
    </source>
</evidence>
<comment type="function">
    <text evidence="1">Catalyzes the attachment of glutamate to tRNA(Glu) in a two-step reaction: glutamate is first activated by ATP to form Glu-AMP and then transferred to the acceptor end of tRNA(Glu).</text>
</comment>
<comment type="catalytic activity">
    <reaction evidence="1">
        <text>tRNA(Glu) + L-glutamate + ATP = L-glutamyl-tRNA(Glu) + AMP + diphosphate</text>
        <dbReference type="Rhea" id="RHEA:23540"/>
        <dbReference type="Rhea" id="RHEA-COMP:9663"/>
        <dbReference type="Rhea" id="RHEA-COMP:9680"/>
        <dbReference type="ChEBI" id="CHEBI:29985"/>
        <dbReference type="ChEBI" id="CHEBI:30616"/>
        <dbReference type="ChEBI" id="CHEBI:33019"/>
        <dbReference type="ChEBI" id="CHEBI:78442"/>
        <dbReference type="ChEBI" id="CHEBI:78520"/>
        <dbReference type="ChEBI" id="CHEBI:456215"/>
        <dbReference type="EC" id="6.1.1.17"/>
    </reaction>
</comment>
<comment type="subunit">
    <text evidence="1">Monomer.</text>
</comment>
<comment type="subcellular location">
    <subcellularLocation>
        <location evidence="1">Cytoplasm</location>
    </subcellularLocation>
</comment>
<comment type="similarity">
    <text evidence="1">Belongs to the class-I aminoacyl-tRNA synthetase family. Glutamate--tRNA ligase type 1 subfamily.</text>
</comment>